<protein>
    <recommendedName>
        <fullName evidence="6">Cystic fibrosis transmembrane conductance regulator</fullName>
        <ecNumber evidence="6 13">5.6.1.6</ecNumber>
    </recommendedName>
    <alternativeName>
        <fullName evidence="6">ATP-binding cassette sub-family C member 7</fullName>
    </alternativeName>
    <alternativeName>
        <fullName evidence="6">Channel conductance-controlling ATPase</fullName>
    </alternativeName>
    <alternativeName>
        <fullName evidence="6">cAMP-dependent chloride channel</fullName>
    </alternativeName>
</protein>
<feature type="chain" id="PRO_0000439670" description="Cystic fibrosis transmembrane conductance regulator">
    <location>
        <begin position="1"/>
        <end position="1485"/>
    </location>
</feature>
<feature type="topological domain" description="Cytoplasmic" evidence="13">
    <location>
        <begin position="1"/>
        <end position="78"/>
    </location>
</feature>
<feature type="transmembrane region" description="Helical; Name=1" evidence="13">
    <location>
        <begin position="79"/>
        <end position="99"/>
    </location>
</feature>
<feature type="topological domain" description="Extracellular" evidence="13">
    <location>
        <begin position="100"/>
        <end position="123"/>
    </location>
</feature>
<feature type="transmembrane region" description="Helical; Name=2" evidence="13">
    <location>
        <begin position="124"/>
        <end position="149"/>
    </location>
</feature>
<feature type="topological domain" description="Cytoplasmic" evidence="13">
    <location>
        <begin position="150"/>
        <end position="195"/>
    </location>
</feature>
<feature type="transmembrane region" description="Helical; Name=3" evidence="13">
    <location>
        <begin position="196"/>
        <end position="216"/>
    </location>
</feature>
<feature type="topological domain" description="Extracellular" evidence="13">
    <location>
        <begin position="217"/>
        <end position="224"/>
    </location>
</feature>
<feature type="transmembrane region" description="Helical; Name=4" evidence="13">
    <location>
        <begin position="225"/>
        <end position="245"/>
    </location>
</feature>
<feature type="topological domain" description="Cytoplasmic" evidence="13">
    <location>
        <begin position="246"/>
        <end position="299"/>
    </location>
</feature>
<feature type="transmembrane region" description="Helical; Name=5" evidence="13">
    <location>
        <begin position="300"/>
        <end position="320"/>
    </location>
</feature>
<feature type="topological domain" description="Extracellular" evidence="13">
    <location>
        <begin position="321"/>
        <end position="340"/>
    </location>
</feature>
<feature type="transmembrane region" description="Helical; Name=6" evidence="13">
    <location>
        <begin position="341"/>
        <end position="363"/>
    </location>
</feature>
<feature type="topological domain" description="Cytoplasmic" evidence="13">
    <location>
        <begin position="364"/>
        <end position="856"/>
    </location>
</feature>
<feature type="transmembrane region" description="Helical; Name=7" evidence="13">
    <location>
        <begin position="857"/>
        <end position="877"/>
    </location>
</feature>
<feature type="topological domain" description="Extracellular" evidence="13">
    <location>
        <begin position="878"/>
        <end position="924"/>
    </location>
</feature>
<feature type="transmembrane region" description="Discontinuously helical; Name=8" evidence="13">
    <location>
        <begin position="925"/>
        <end position="946"/>
    </location>
</feature>
<feature type="topological domain" description="Cytoplasmic" evidence="13">
    <location>
        <begin position="947"/>
        <end position="996"/>
    </location>
</feature>
<feature type="transmembrane region" description="Helical; Name=9" evidence="13">
    <location>
        <begin position="997"/>
        <end position="1019"/>
    </location>
</feature>
<feature type="topological domain" description="Extracellular" evidence="13">
    <location>
        <begin position="1020"/>
        <end position="1021"/>
    </location>
</feature>
<feature type="transmembrane region" description="Helical; Name=10" evidence="13">
    <location>
        <begin position="1022"/>
        <end position="1042"/>
    </location>
</feature>
<feature type="topological domain" description="Cytoplasmic" evidence="13">
    <location>
        <begin position="1043"/>
        <end position="1103"/>
    </location>
</feature>
<feature type="transmembrane region" description="Helical; Name=11" evidence="13">
    <location>
        <begin position="1104"/>
        <end position="1124"/>
    </location>
</feature>
<feature type="topological domain" description="Extracellular" evidence="13">
    <location>
        <begin position="1125"/>
        <end position="1138"/>
    </location>
</feature>
<feature type="transmembrane region" description="Helical; Name=12" evidence="13">
    <location>
        <begin position="1139"/>
        <end position="1159"/>
    </location>
</feature>
<feature type="topological domain" description="Cytoplasmic" evidence="13">
    <location>
        <begin position="1160"/>
        <end position="1485"/>
    </location>
</feature>
<feature type="domain" description="ABC transmembrane type-1 1" evidence="4">
    <location>
        <begin position="83"/>
        <end position="353"/>
    </location>
</feature>
<feature type="domain" description="ABC transporter 1" evidence="3">
    <location>
        <begin position="424"/>
        <end position="645"/>
    </location>
</feature>
<feature type="domain" description="ABC transmembrane type-1 2" evidence="4">
    <location>
        <begin position="860"/>
        <end position="1163"/>
    </location>
</feature>
<feature type="domain" description="ABC transporter 2" evidence="3">
    <location>
        <begin position="1211"/>
        <end position="1444"/>
    </location>
</feature>
<feature type="region of interest" description="Disordered R region" evidence="1">
    <location>
        <begin position="653"/>
        <end position="826"/>
    </location>
</feature>
<feature type="region of interest" description="Disordered" evidence="7">
    <location>
        <begin position="1452"/>
        <end position="1485"/>
    </location>
</feature>
<feature type="short sequence motif" description="PDZ-binding" evidence="1">
    <location>
        <begin position="1483"/>
        <end position="1485"/>
    </location>
</feature>
<feature type="compositionally biased region" description="Polar residues" evidence="7">
    <location>
        <begin position="1454"/>
        <end position="1473"/>
    </location>
</feature>
<feature type="compositionally biased region" description="Acidic residues" evidence="7">
    <location>
        <begin position="1474"/>
        <end position="1485"/>
    </location>
</feature>
<feature type="binding site" evidence="1">
    <location>
        <position position="402"/>
    </location>
    <ligand>
        <name>ATP</name>
        <dbReference type="ChEBI" id="CHEBI:30616"/>
        <label>1</label>
    </ligand>
</feature>
<feature type="binding site" evidence="3">
    <location>
        <begin position="457"/>
        <end position="464"/>
    </location>
    <ligand>
        <name>ATP</name>
        <dbReference type="ChEBI" id="CHEBI:30616"/>
        <label>1</label>
    </ligand>
</feature>
<feature type="binding site" evidence="1">
    <location>
        <position position="492"/>
    </location>
    <ligand>
        <name>ATP</name>
        <dbReference type="ChEBI" id="CHEBI:30616"/>
        <label>1</label>
    </ligand>
</feature>
<feature type="binding site" evidence="1">
    <location>
        <position position="1220"/>
    </location>
    <ligand>
        <name>ATP</name>
        <dbReference type="ChEBI" id="CHEBI:30616"/>
        <label>2</label>
    </ligand>
</feature>
<feature type="binding site" evidence="3">
    <location>
        <begin position="1245"/>
        <end position="1252"/>
    </location>
    <ligand>
        <name>ATP</name>
        <dbReference type="ChEBI" id="CHEBI:30616"/>
        <label>2</label>
    </ligand>
</feature>
<feature type="glycosylation site" description="N-linked (GlcNAc...) asparagine" evidence="5">
    <location>
        <position position="897"/>
    </location>
</feature>
<feature type="glycosylation site" description="N-linked (GlcNAc...) asparagine" evidence="5">
    <location>
        <position position="903"/>
    </location>
</feature>
<feature type="mutagenesis site" description="In pd1048; abolishes trafficking to the cell membrane and leads to severe reduction of the size of the Kupffer's vesicle." evidence="10">
    <location>
        <begin position="205"/>
        <end position="206"/>
    </location>
</feature>
<feature type="sequence conflict" description="In Ref. 2; AAI71654." evidence="15" ref="2">
    <original>C</original>
    <variation>S</variation>
    <location>
        <position position="658"/>
    </location>
</feature>
<feature type="strand" evidence="21">
    <location>
        <begin position="7"/>
        <end position="9"/>
    </location>
</feature>
<feature type="helix" evidence="21">
    <location>
        <begin position="11"/>
        <end position="16"/>
    </location>
</feature>
<feature type="helix" evidence="21">
    <location>
        <begin position="18"/>
        <end position="20"/>
    </location>
</feature>
<feature type="helix" evidence="21">
    <location>
        <begin position="21"/>
        <end position="29"/>
    </location>
</feature>
<feature type="turn" evidence="21">
    <location>
        <begin position="34"/>
        <end position="36"/>
    </location>
</feature>
<feature type="helix" evidence="21">
    <location>
        <begin position="46"/>
        <end position="62"/>
    </location>
</feature>
<feature type="helix" evidence="21">
    <location>
        <begin position="70"/>
        <end position="97"/>
    </location>
</feature>
<feature type="helix" evidence="21">
    <location>
        <begin position="99"/>
        <end position="108"/>
    </location>
</feature>
<feature type="strand" evidence="21">
    <location>
        <begin position="114"/>
        <end position="116"/>
    </location>
</feature>
<feature type="helix" evidence="21">
    <location>
        <begin position="120"/>
        <end position="165"/>
    </location>
</feature>
<feature type="helix" evidence="21">
    <location>
        <begin position="170"/>
        <end position="173"/>
    </location>
</feature>
<feature type="helix" evidence="21">
    <location>
        <begin position="178"/>
        <end position="194"/>
    </location>
</feature>
<feature type="helix" evidence="21">
    <location>
        <begin position="196"/>
        <end position="199"/>
    </location>
</feature>
<feature type="helix" evidence="21">
    <location>
        <begin position="201"/>
        <end position="216"/>
    </location>
</feature>
<feature type="helix" evidence="21">
    <location>
        <begin position="222"/>
        <end position="268"/>
    </location>
</feature>
<feature type="helix" evidence="21">
    <location>
        <begin position="270"/>
        <end position="276"/>
    </location>
</feature>
<feature type="helix" evidence="21">
    <location>
        <begin position="280"/>
        <end position="328"/>
    </location>
</feature>
<feature type="helix" evidence="21">
    <location>
        <begin position="336"/>
        <end position="352"/>
    </location>
</feature>
<feature type="helix" evidence="21">
    <location>
        <begin position="354"/>
        <end position="376"/>
    </location>
</feature>
<feature type="strand" evidence="21">
    <location>
        <begin position="394"/>
        <end position="400"/>
    </location>
</feature>
<feature type="turn" evidence="21">
    <location>
        <begin position="402"/>
        <end position="404"/>
    </location>
</feature>
<feature type="strand" evidence="21">
    <location>
        <begin position="439"/>
        <end position="446"/>
    </location>
</feature>
<feature type="strand" evidence="21">
    <location>
        <begin position="452"/>
        <end position="456"/>
    </location>
</feature>
<feature type="helix" evidence="21">
    <location>
        <begin position="463"/>
        <end position="471"/>
    </location>
</feature>
<feature type="strand" evidence="21">
    <location>
        <begin position="477"/>
        <end position="482"/>
    </location>
</feature>
<feature type="strand" evidence="21">
    <location>
        <begin position="487"/>
        <end position="490"/>
    </location>
</feature>
<feature type="helix" evidence="21">
    <location>
        <begin position="501"/>
        <end position="506"/>
    </location>
</feature>
<feature type="helix" evidence="21">
    <location>
        <begin position="514"/>
        <end position="522"/>
    </location>
</feature>
<feature type="helix" evidence="21">
    <location>
        <begin position="526"/>
        <end position="530"/>
    </location>
</feature>
<feature type="strand" evidence="21">
    <location>
        <begin position="532"/>
        <end position="536"/>
    </location>
</feature>
<feature type="strand" evidence="21">
    <location>
        <begin position="544"/>
        <end position="547"/>
    </location>
</feature>
<feature type="helix" evidence="21">
    <location>
        <begin position="549"/>
        <end position="562"/>
    </location>
</feature>
<feature type="strand" evidence="21">
    <location>
        <begin position="566"/>
        <end position="570"/>
    </location>
</feature>
<feature type="strand" evidence="21">
    <location>
        <begin position="575"/>
        <end position="577"/>
    </location>
</feature>
<feature type="helix" evidence="21">
    <location>
        <begin position="579"/>
        <end position="588"/>
    </location>
</feature>
<feature type="helix" evidence="21">
    <location>
        <begin position="589"/>
        <end position="593"/>
    </location>
</feature>
<feature type="strand" evidence="21">
    <location>
        <begin position="597"/>
        <end position="602"/>
    </location>
</feature>
<feature type="helix" evidence="21">
    <location>
        <begin position="606"/>
        <end position="611"/>
    </location>
</feature>
<feature type="strand" evidence="21">
    <location>
        <begin position="612"/>
        <end position="619"/>
    </location>
</feature>
<feature type="strand" evidence="21">
    <location>
        <begin position="622"/>
        <end position="627"/>
    </location>
</feature>
<feature type="helix" evidence="21">
    <location>
        <begin position="629"/>
        <end position="634"/>
    </location>
</feature>
<feature type="strand" evidence="21">
    <location>
        <begin position="635"/>
        <end position="637"/>
    </location>
</feature>
<feature type="helix" evidence="21">
    <location>
        <begin position="845"/>
        <end position="853"/>
    </location>
</feature>
<feature type="helix" evidence="21">
    <location>
        <begin position="855"/>
        <end position="885"/>
    </location>
</feature>
<feature type="helix" evidence="21">
    <location>
        <begin position="922"/>
        <end position="934"/>
    </location>
</feature>
<feature type="helix" evidence="21">
    <location>
        <begin position="939"/>
        <end position="965"/>
    </location>
</feature>
<feature type="helix" evidence="21">
    <location>
        <begin position="969"/>
        <end position="974"/>
    </location>
</feature>
<feature type="helix" evidence="21">
    <location>
        <begin position="977"/>
        <end position="993"/>
    </location>
</feature>
<feature type="helix" evidence="21">
    <location>
        <begin position="995"/>
        <end position="1018"/>
    </location>
</feature>
<feature type="helix" evidence="21">
    <location>
        <begin position="1023"/>
        <end position="1055"/>
    </location>
</feature>
<feature type="helix" evidence="21">
    <location>
        <begin position="1057"/>
        <end position="1068"/>
    </location>
</feature>
<feature type="helix" evidence="21">
    <location>
        <begin position="1070"/>
        <end position="1075"/>
    </location>
</feature>
<feature type="helix" evidence="21">
    <location>
        <begin position="1079"/>
        <end position="1125"/>
    </location>
</feature>
<feature type="helix" evidence="21">
    <location>
        <begin position="1138"/>
        <end position="1147"/>
    </location>
</feature>
<feature type="turn" evidence="21">
    <location>
        <begin position="1148"/>
        <end position="1150"/>
    </location>
</feature>
<feature type="helix" evidence="21">
    <location>
        <begin position="1151"/>
        <end position="1165"/>
    </location>
</feature>
<feature type="helix" evidence="21">
    <location>
        <begin position="1167"/>
        <end position="1175"/>
    </location>
</feature>
<feature type="strand" evidence="21">
    <location>
        <begin position="1211"/>
        <end position="1221"/>
    </location>
</feature>
<feature type="strand" evidence="21">
    <location>
        <begin position="1227"/>
        <end position="1235"/>
    </location>
</feature>
<feature type="strand" evidence="21">
    <location>
        <begin position="1240"/>
        <end position="1245"/>
    </location>
</feature>
<feature type="helix" evidence="21">
    <location>
        <begin position="1251"/>
        <end position="1258"/>
    </location>
</feature>
<feature type="strand" evidence="21">
    <location>
        <begin position="1262"/>
        <end position="1264"/>
    </location>
</feature>
<feature type="turn" evidence="21">
    <location>
        <begin position="1275"/>
        <end position="1277"/>
    </location>
</feature>
<feature type="helix" evidence="21">
    <location>
        <begin position="1280"/>
        <end position="1285"/>
    </location>
</feature>
<feature type="strand" evidence="21">
    <location>
        <begin position="1287"/>
        <end position="1290"/>
    </location>
</feature>
<feature type="helix" evidence="21">
    <location>
        <begin position="1301"/>
        <end position="1305"/>
    </location>
</feature>
<feature type="helix" evidence="21">
    <location>
        <begin position="1313"/>
        <end position="1322"/>
    </location>
</feature>
<feature type="helix" evidence="21">
    <location>
        <begin position="1326"/>
        <end position="1330"/>
    </location>
</feature>
<feature type="strand" evidence="21">
    <location>
        <begin position="1332"/>
        <end position="1334"/>
    </location>
</feature>
<feature type="strand" evidence="21">
    <location>
        <begin position="1342"/>
        <end position="1347"/>
    </location>
</feature>
<feature type="helix" evidence="21">
    <location>
        <begin position="1349"/>
        <end position="1363"/>
    </location>
</feature>
<feature type="strand" evidence="21">
    <location>
        <begin position="1366"/>
        <end position="1371"/>
    </location>
</feature>
<feature type="helix" evidence="21">
    <location>
        <begin position="1379"/>
        <end position="1392"/>
    </location>
</feature>
<feature type="strand" evidence="21">
    <location>
        <begin position="1393"/>
        <end position="1395"/>
    </location>
</feature>
<feature type="strand" evidence="21">
    <location>
        <begin position="1397"/>
        <end position="1401"/>
    </location>
</feature>
<feature type="helix" evidence="21">
    <location>
        <begin position="1408"/>
        <end position="1410"/>
    </location>
</feature>
<feature type="strand" evidence="21">
    <location>
        <begin position="1411"/>
        <end position="1417"/>
    </location>
</feature>
<feature type="strand" evidence="21">
    <location>
        <begin position="1419"/>
        <end position="1427"/>
    </location>
</feature>
<feature type="helix" evidence="21">
    <location>
        <begin position="1428"/>
        <end position="1434"/>
    </location>
</feature>
<feature type="strand" evidence="21">
    <location>
        <begin position="1437"/>
        <end position="1439"/>
    </location>
</feature>
<feature type="turn" evidence="21">
    <location>
        <begin position="1440"/>
        <end position="1442"/>
    </location>
</feature>
<feature type="helix" evidence="21">
    <location>
        <begin position="1447"/>
        <end position="1450"/>
    </location>
</feature>
<feature type="helix" evidence="21">
    <location>
        <begin position="1453"/>
        <end position="1456"/>
    </location>
</feature>
<proteinExistence type="evidence at protein level"/>
<evidence type="ECO:0000250" key="1">
    <source>
        <dbReference type="UniProtKB" id="P13569"/>
    </source>
</evidence>
<evidence type="ECO:0000250" key="2">
    <source>
        <dbReference type="UniProtKB" id="P26361"/>
    </source>
</evidence>
<evidence type="ECO:0000255" key="3">
    <source>
        <dbReference type="PROSITE-ProRule" id="PRU00434"/>
    </source>
</evidence>
<evidence type="ECO:0000255" key="4">
    <source>
        <dbReference type="PROSITE-ProRule" id="PRU00441"/>
    </source>
</evidence>
<evidence type="ECO:0000255" key="5">
    <source>
        <dbReference type="PROSITE-ProRule" id="PRU00498"/>
    </source>
</evidence>
<evidence type="ECO:0000255" key="6">
    <source>
        <dbReference type="RuleBase" id="RU362037"/>
    </source>
</evidence>
<evidence type="ECO:0000256" key="7">
    <source>
        <dbReference type="SAM" id="MobiDB-lite"/>
    </source>
</evidence>
<evidence type="ECO:0000269" key="8">
    <source>
    </source>
</evidence>
<evidence type="ECO:0000269" key="9">
    <source>
    </source>
</evidence>
<evidence type="ECO:0000269" key="10">
    <source>
    </source>
</evidence>
<evidence type="ECO:0000269" key="11">
    <source>
    </source>
</evidence>
<evidence type="ECO:0000269" key="12">
    <source>
    </source>
</evidence>
<evidence type="ECO:0000269" key="13">
    <source>
    </source>
</evidence>
<evidence type="ECO:0000269" key="14">
    <source>
    </source>
</evidence>
<evidence type="ECO:0000305" key="15"/>
<evidence type="ECO:0000305" key="16">
    <source>
    </source>
</evidence>
<evidence type="ECO:0000305" key="17">
    <source>
    </source>
</evidence>
<evidence type="ECO:0000312" key="18">
    <source>
        <dbReference type="EMBL" id="AAI71654.1"/>
    </source>
</evidence>
<evidence type="ECO:0000312" key="19">
    <source>
        <dbReference type="Proteomes" id="UP000000437"/>
    </source>
</evidence>
<evidence type="ECO:0000312" key="20">
    <source>
        <dbReference type="ZFIN" id="ZDB-GENE-050517-20"/>
    </source>
</evidence>
<evidence type="ECO:0007829" key="21">
    <source>
        <dbReference type="PDB" id="5W81"/>
    </source>
</evidence>
<gene>
    <name evidence="20" type="primary">cftr</name>
</gene>
<accession>Q1LX78</accession>
<accession>B7ZVN9</accession>
<comment type="function">
    <text evidence="1 8 9 10 12 13 14 16">Epithelial ion channel that plays an important role in the regulation of epithelial ion and water transport and fluid homeostasis (PubMed:20933420, PubMed:23487313, PubMed:25592226). Mediates the transport of chloride ions across the cell membrane (By similarity). Possesses an intrinsic ATPase activity and utilizes ATP to gate its channel; the passive flow of anions through the channel is gated by cycles of ATP binding and hydrolysis by the ATP-binding domains (PubMed:27912062). The ion channel is also permeable to HCO(3)(-); selectivity depends on the extracellular chloride concentration. Exerts its function also by modulating the activity of other ion channels and transporters. Contributes to the regulation of the pH and the ion content of the epithelial fluid layer (By similarity). Required for normal fluid homeostasis in the gut (PubMed:20933420). Required for normal volume expansion and cell shape changes of Kupffer's vesicle during embryonic development and for normal establishment of left-right body patterning (PubMed:23487313, PubMed:26432887, PubMed:29376824). Required for normal resistance to infection by P.aeruginosa strain PA14 and strain SMC573 (PubMed:20732993).</text>
</comment>
<comment type="catalytic activity">
    <reaction evidence="6 13">
        <text>ATP + H2O + closed Cl(-) channel = ADP + phosphate + open Cl(-) channel.</text>
        <dbReference type="EC" id="5.6.1.6"/>
    </reaction>
</comment>
<comment type="catalytic activity">
    <reaction evidence="1">
        <text>chloride(in) = chloride(out)</text>
        <dbReference type="Rhea" id="RHEA:29823"/>
        <dbReference type="ChEBI" id="CHEBI:17996"/>
    </reaction>
</comment>
<comment type="catalytic activity">
    <reaction evidence="1">
        <text>hydrogencarbonate(in) = hydrogencarbonate(out)</text>
        <dbReference type="Rhea" id="RHEA:28695"/>
        <dbReference type="ChEBI" id="CHEBI:17544"/>
    </reaction>
</comment>
<comment type="catalytic activity">
    <reaction evidence="1">
        <text>ATP + H2O = ADP + phosphate + H(+)</text>
        <dbReference type="Rhea" id="RHEA:13065"/>
        <dbReference type="ChEBI" id="CHEBI:15377"/>
        <dbReference type="ChEBI" id="CHEBI:15378"/>
        <dbReference type="ChEBI" id="CHEBI:30616"/>
        <dbReference type="ChEBI" id="CHEBI:43474"/>
        <dbReference type="ChEBI" id="CHEBI:456216"/>
    </reaction>
    <physiologicalReaction direction="left-to-right" evidence="1">
        <dbReference type="Rhea" id="RHEA:13066"/>
    </physiologicalReaction>
</comment>
<comment type="biophysicochemical properties">
    <kinetics>
        <KM evidence="13">0.22 mM for ATP</KM>
    </kinetics>
</comment>
<comment type="subunit">
    <text evidence="1 9">Monomer; does not require oligomerization for channel activity (By similarity). Interacts with cse1l; this interaction may down-regulate cftr activity (PubMed:20933420).</text>
</comment>
<comment type="subcellular location">
    <subcellularLocation>
        <location evidence="9 10 11">Apical cell membrane</location>
        <topology evidence="13">Multi-pass membrane protein</topology>
    </subcellularLocation>
    <subcellularLocation>
        <location evidence="1">Early endosome membrane</location>
        <topology evidence="13">Multi-pass membrane protein</topology>
    </subcellularLocation>
    <subcellularLocation>
        <location evidence="10 17">Cell membrane</location>
        <topology evidence="13">Multi-pass membrane protein</topology>
    </subcellularLocation>
    <subcellularLocation>
        <location evidence="1">Recycling endosome membrane</location>
        <topology evidence="13">Multi-pass membrane protein</topology>
    </subcellularLocation>
    <subcellularLocation>
        <location evidence="1">Endoplasmic reticulum membrane</location>
        <topology evidence="13">Multi-pass membrane protein</topology>
    </subcellularLocation>
    <text evidence="1">The channel is internalized from the cell surface into an endosomal recycling compartment, from where it is recycled to the cell membrane.</text>
</comment>
<comment type="tissue specificity">
    <text evidence="8 11">Detected in gut epithelium (at protein level) (PubMed:20933420). Detected in kidney, spleen, intestine and liver (PubMed:20732993). Detected in pancreatic duct epithelium at 5 dpf and throughout adult life (PubMed:25592226).</text>
</comment>
<comment type="developmental stage">
    <text evidence="10 11 12">First detected in developing pancreatic duct at 3 dpf (PubMed:25592226). Detected on Kupffer's vesicle during embryonic development (PubMed:23487313, PubMed:26432887). Detected on neural floorplate, brain and pronephric duct primordia in embryos at the 10 somite stage (PubMed:26432887).</text>
</comment>
<comment type="domain">
    <text evidence="1 2">Binds and hydrolyzes ATP via the two cytoplasmic ABC transporter nucleotide-binding domains. The two ATP-binding domains interact with each other, forming a head-to-tail dimer. Normal ATPase activity requires interaction between the two domains. The first ABC transporter nucleotide-binding domain has no ATPase activity by itself.</text>
</comment>
<comment type="domain">
    <text evidence="1">The disordered R region mediates channel activation when it is phosphorylated, but not in the absence of phosphorylation.</text>
</comment>
<comment type="PTM">
    <text evidence="1 13">Phosphorylated; this activates the channel (PubMed:27912062). Dephosphorylation strongly decreases ATPase activity (PubMed:27912062). Phosphorylation at PKA sites activates the channel. Phosphorylation at PKC sites enhances the response to phosphorylation by PKA (By similarity).</text>
</comment>
<comment type="disruption phenotype">
    <text evidence="8 11 12 14">Considerable lethality around 10 dpf (PubMed:25592226). No effect on initial pancreas development, but at 16 dpf mutants display loss of pancreatic acinar tissue (PubMed:25592226). At 22 dpf, most pancreatic acinar tissue has disappeared and has been replaced by fibrotic tissue that surrounds dilated, mucus-filled ducts (PubMed:25592226). Morpholino knockdown of the protein in 48 hpf embryos leads to impaired resistance to P.aeruginosa strain PA14 and strain SMC573, as shown by the increased bacterial burden, but there is no effect on resistance to E.tarda, B.cenocepacia, S.aureus MZ100, E.coli XL-10 and H.influenzae Hib EAGAN (PubMed:20732993). Morpholino knockdown of the protein causes failure of Kupffer's vesicle lumen expansion, disruption of asymmetric cell volume and shape changes, and an increase in volume of both anterior and posterior Kupffer's vesicle cells due to inhibition of fluid efflux.</text>
</comment>
<comment type="miscellaneous">
    <text evidence="10">Mutations that lead to the production of a severely truncated protein that ends before the start of the fourth transmembrane domain disrupt normal left-right body patterning during embryogenesis and abolish lumen expansion of Kupffer's vesicle.</text>
</comment>
<comment type="similarity">
    <text evidence="6">Belongs to the ABC transporter superfamily. ABCC family. CFTR transporter (TC 3.A.1.202) subfamily.</text>
</comment>
<sequence>MQRSPVEDANCLSRYFFWWTNPIMRKGFKEKLRPSDVYQAPSQDAADILAERLEKEWDREVASGKKKPSLLRAMARCYIKPFLLFGFLLYIGEATKTVQPQLLGRIIASFDPAHEPERANGYFLAFGLGLLFTARFLLLQPAMFGLHHLGMQIRIALFSIIYKKTLKLSSRVLDKISTGQLVSLMSANLGKFDQSLGMAHFIWISPLQCILCTGLIWELIDVNSFCALAAISLLGVLQAFLSHKMGPYKAQKVLLTNKRLALTSEIMENLHSVKAYGWEEIMETLIKNIRQDEVKLTRKIGSLRYFYSSAYFFSAIFVIVAAVVPHALSRGINLRRIFTTLSYCMVLRMTVTRQLPGSIQMWYDTMRLIWKIEEFLSKEEYKLMEYDLSITELELQDVTASWDEGPGELLERIKQENKANGHHNGDAGLFFTNLYVAPVLKDISLKLKKGEMLAVTGSMGSGKSSLLMTILGELVPSSGKIRHSGRISYSSQTAWIMPGTIRDNILFGLTYDEYRYKSVVKACQLEEDLAALPEKDKTPMAEGGLNLSGGQKARVALARAVYRDADLYLLDAPFTHLDIATEKEIFDKCLCKLMASKTRILVTNKIEHLKRADKILLLHNGESFFYGTFPELQSERPDFSSLLLGLEAYDNISAERRCSILTETLHRVSVDESAGMQPERSAFRQVPPTKPMYIDERKASVIVNPLGVARKASFIQVPEEEVRRTLPDRKFSLVPENELVDESFMGSDVYHNHGVHMAGQRRQSVLAFMTNAQGQGRREHLQSSFRRRLSVVPQSELASELDIYTRRLSDSTYDMTGILEEENIEACLTDEIDEIEETFETTKWNTYVRYVSNNKSLLYVLIFILFIAAIEIAGSVAGIFLITDELWREEHQRSEPNMTKHSNASSSGQTYAITVTPTSSYYILYIYVATSESLLAMGFFRGLPFVHTTITISKKLHQKMLHAVLSAPMSVLNTMKTGRIMNRFTKDMATIDDMLPLLMFDFVQLTVVVVGCILVVSIVRPYIFLAATPLAIIFIVMRKYFLRTGQQLKQLETEARSPIFSHLIMSLKGLWTIRAFERQAYFEALFHKTLNTHTATWFLYLSTLRWFLFRADILFVFFFTLAAWIAVGTNQDKPGEIGIIICLAMLILGTFQWCVATSIAVDGMMRSVDRVFKFIDLPSETPKPDKGKDSDLIIENVDAQADSSWPHRGQIEVRNLTVKYTEAGHAVLKNLSFSAEGRQRVGILGRTGSGKSSLFNALLKLVYTDGEISIDGVNWNKMPLQKWRKAFGVVPQKVFIFTGPLRMNLDPYGCHSDEELWRVAEEVGLKTVIEQFPDKLDFQLEYGGYVLSNGHKQLICLARSILSGARILLLDEPSAHLDPVTIKVLKKTLRQSFSTCTILLSEHKVEPLLECQSFLMMDKGQVKTYDSIQKLLNETSHLKQAISPAERLKLFPRRNSSMRTPQSKLSSVTQTLQEEAEDNIQDTRL</sequence>
<organism>
    <name type="scientific">Danio rerio</name>
    <name type="common">Zebrafish</name>
    <name type="synonym">Brachydanio rerio</name>
    <dbReference type="NCBI Taxonomy" id="7955"/>
    <lineage>
        <taxon>Eukaryota</taxon>
        <taxon>Metazoa</taxon>
        <taxon>Chordata</taxon>
        <taxon>Craniata</taxon>
        <taxon>Vertebrata</taxon>
        <taxon>Euteleostomi</taxon>
        <taxon>Actinopterygii</taxon>
        <taxon>Neopterygii</taxon>
        <taxon>Teleostei</taxon>
        <taxon>Ostariophysi</taxon>
        <taxon>Cypriniformes</taxon>
        <taxon>Danionidae</taxon>
        <taxon>Danioninae</taxon>
        <taxon>Danio</taxon>
    </lineage>
</organism>
<keyword id="KW-0002">3D-structure</keyword>
<keyword id="KW-0067">ATP-binding</keyword>
<keyword id="KW-1003">Cell membrane</keyword>
<keyword id="KW-0868">Chloride</keyword>
<keyword id="KW-0869">Chloride channel</keyword>
<keyword id="KW-0256">Endoplasmic reticulum</keyword>
<keyword id="KW-0967">Endosome</keyword>
<keyword id="KW-0325">Glycoprotein</keyword>
<keyword id="KW-0407">Ion channel</keyword>
<keyword id="KW-0406">Ion transport</keyword>
<keyword id="KW-0413">Isomerase</keyword>
<keyword id="KW-0472">Membrane</keyword>
<keyword id="KW-0547">Nucleotide-binding</keyword>
<keyword id="KW-0597">Phosphoprotein</keyword>
<keyword id="KW-1185">Reference proteome</keyword>
<keyword id="KW-0677">Repeat</keyword>
<keyword id="KW-0812">Transmembrane</keyword>
<keyword id="KW-1133">Transmembrane helix</keyword>
<keyword id="KW-0813">Transport</keyword>
<reference evidence="19" key="1">
    <citation type="journal article" date="2013" name="Nature">
        <title>The zebrafish reference genome sequence and its relationship to the human genome.</title>
        <authorList>
            <person name="Howe K."/>
            <person name="Clark M.D."/>
            <person name="Torroja C.F."/>
            <person name="Torrance J."/>
            <person name="Berthelot C."/>
            <person name="Muffato M."/>
            <person name="Collins J.E."/>
            <person name="Humphray S."/>
            <person name="McLaren K."/>
            <person name="Matthews L."/>
            <person name="McLaren S."/>
            <person name="Sealy I."/>
            <person name="Caccamo M."/>
            <person name="Churcher C."/>
            <person name="Scott C."/>
            <person name="Barrett J.C."/>
            <person name="Koch R."/>
            <person name="Rauch G.J."/>
            <person name="White S."/>
            <person name="Chow W."/>
            <person name="Kilian B."/>
            <person name="Quintais L.T."/>
            <person name="Guerra-Assuncao J.A."/>
            <person name="Zhou Y."/>
            <person name="Gu Y."/>
            <person name="Yen J."/>
            <person name="Vogel J.H."/>
            <person name="Eyre T."/>
            <person name="Redmond S."/>
            <person name="Banerjee R."/>
            <person name="Chi J."/>
            <person name="Fu B."/>
            <person name="Langley E."/>
            <person name="Maguire S.F."/>
            <person name="Laird G.K."/>
            <person name="Lloyd D."/>
            <person name="Kenyon E."/>
            <person name="Donaldson S."/>
            <person name="Sehra H."/>
            <person name="Almeida-King J."/>
            <person name="Loveland J."/>
            <person name="Trevanion S."/>
            <person name="Jones M."/>
            <person name="Quail M."/>
            <person name="Willey D."/>
            <person name="Hunt A."/>
            <person name="Burton J."/>
            <person name="Sims S."/>
            <person name="McLay K."/>
            <person name="Plumb B."/>
            <person name="Davis J."/>
            <person name="Clee C."/>
            <person name="Oliver K."/>
            <person name="Clark R."/>
            <person name="Riddle C."/>
            <person name="Elliot D."/>
            <person name="Threadgold G."/>
            <person name="Harden G."/>
            <person name="Ware D."/>
            <person name="Begum S."/>
            <person name="Mortimore B."/>
            <person name="Kerry G."/>
            <person name="Heath P."/>
            <person name="Phillimore B."/>
            <person name="Tracey A."/>
            <person name="Corby N."/>
            <person name="Dunn M."/>
            <person name="Johnson C."/>
            <person name="Wood J."/>
            <person name="Clark S."/>
            <person name="Pelan S."/>
            <person name="Griffiths G."/>
            <person name="Smith M."/>
            <person name="Glithero R."/>
            <person name="Howden P."/>
            <person name="Barker N."/>
            <person name="Lloyd C."/>
            <person name="Stevens C."/>
            <person name="Harley J."/>
            <person name="Holt K."/>
            <person name="Panagiotidis G."/>
            <person name="Lovell J."/>
            <person name="Beasley H."/>
            <person name="Henderson C."/>
            <person name="Gordon D."/>
            <person name="Auger K."/>
            <person name="Wright D."/>
            <person name="Collins J."/>
            <person name="Raisen C."/>
            <person name="Dyer L."/>
            <person name="Leung K."/>
            <person name="Robertson L."/>
            <person name="Ambridge K."/>
            <person name="Leongamornlert D."/>
            <person name="McGuire S."/>
            <person name="Gilderthorp R."/>
            <person name="Griffiths C."/>
            <person name="Manthravadi D."/>
            <person name="Nichol S."/>
            <person name="Barker G."/>
            <person name="Whitehead S."/>
            <person name="Kay M."/>
            <person name="Brown J."/>
            <person name="Murnane C."/>
            <person name="Gray E."/>
            <person name="Humphries M."/>
            <person name="Sycamore N."/>
            <person name="Barker D."/>
            <person name="Saunders D."/>
            <person name="Wallis J."/>
            <person name="Babbage A."/>
            <person name="Hammond S."/>
            <person name="Mashreghi-Mohammadi M."/>
            <person name="Barr L."/>
            <person name="Martin S."/>
            <person name="Wray P."/>
            <person name="Ellington A."/>
            <person name="Matthews N."/>
            <person name="Ellwood M."/>
            <person name="Woodmansey R."/>
            <person name="Clark G."/>
            <person name="Cooper J."/>
            <person name="Tromans A."/>
            <person name="Grafham D."/>
            <person name="Skuce C."/>
            <person name="Pandian R."/>
            <person name="Andrews R."/>
            <person name="Harrison E."/>
            <person name="Kimberley A."/>
            <person name="Garnett J."/>
            <person name="Fosker N."/>
            <person name="Hall R."/>
            <person name="Garner P."/>
            <person name="Kelly D."/>
            <person name="Bird C."/>
            <person name="Palmer S."/>
            <person name="Gehring I."/>
            <person name="Berger A."/>
            <person name="Dooley C.M."/>
            <person name="Ersan-Urun Z."/>
            <person name="Eser C."/>
            <person name="Geiger H."/>
            <person name="Geisler M."/>
            <person name="Karotki L."/>
            <person name="Kirn A."/>
            <person name="Konantz J."/>
            <person name="Konantz M."/>
            <person name="Oberlander M."/>
            <person name="Rudolph-Geiger S."/>
            <person name="Teucke M."/>
            <person name="Lanz C."/>
            <person name="Raddatz G."/>
            <person name="Osoegawa K."/>
            <person name="Zhu B."/>
            <person name="Rapp A."/>
            <person name="Widaa S."/>
            <person name="Langford C."/>
            <person name="Yang F."/>
            <person name="Schuster S.C."/>
            <person name="Carter N.P."/>
            <person name="Harrow J."/>
            <person name="Ning Z."/>
            <person name="Herrero J."/>
            <person name="Searle S.M."/>
            <person name="Enright A."/>
            <person name="Geisler R."/>
            <person name="Plasterk R.H."/>
            <person name="Lee C."/>
            <person name="Westerfield M."/>
            <person name="de Jong P.J."/>
            <person name="Zon L.I."/>
            <person name="Postlethwait J.H."/>
            <person name="Nusslein-Volhard C."/>
            <person name="Hubbard T.J."/>
            <person name="Roest Crollius H."/>
            <person name="Rogers J."/>
            <person name="Stemple D.L."/>
        </authorList>
    </citation>
    <scope>NUCLEOTIDE SEQUENCE [LARGE SCALE GENOMIC DNA]</scope>
    <source>
        <strain evidence="19">Tuebingen</strain>
    </source>
</reference>
<reference evidence="18" key="2">
    <citation type="submission" date="2008-11" db="EMBL/GenBank/DDBJ databases">
        <authorList>
            <consortium name="NIH - Zebrafish Gene Collection (ZGC) project"/>
        </authorList>
    </citation>
    <scope>NUCLEOTIDE SEQUENCE [LARGE SCALE MRNA]</scope>
</reference>
<reference key="3">
    <citation type="journal article" date="2010" name="Curr. Biol.">
        <title>Cse1l is a negative regulator of CFTR-dependent fluid secretion.</title>
        <authorList>
            <person name="Bagnat M."/>
            <person name="Navis A."/>
            <person name="Herbstreith S."/>
            <person name="Brand-Arzamendi K."/>
            <person name="Curado S."/>
            <person name="Gabriel S."/>
            <person name="Mostov K."/>
            <person name="Huisken J."/>
            <person name="Stainier D.Y."/>
        </authorList>
    </citation>
    <scope>FUNCTION</scope>
    <scope>SUBCELLULAR LOCATION</scope>
    <scope>TISSUE SPECIFICITY</scope>
</reference>
<reference key="4">
    <citation type="journal article" date="2010" name="Infect. Immun.">
        <title>Specific resistance to Pseudomonas aeruginosa infection in zebrafish is mediated by the cystic fibrosis transmembrane conductance regulator.</title>
        <authorList>
            <person name="Phennicie R.T."/>
            <person name="Sullivan M.J."/>
            <person name="Singer J.T."/>
            <person name="Yoder J.A."/>
            <person name="Kim C.H."/>
        </authorList>
    </citation>
    <scope>DISRUPTION PHENOTYPE</scope>
    <scope>TISSUE SPECIFICITY</scope>
</reference>
<reference key="5">
    <citation type="journal article" date="2013" name="Development">
        <title>Cftr controls lumen expansion and function of Kupffer's vesicle in zebrafish.</title>
        <authorList>
            <person name="Navis A."/>
            <person name="Marjoram L."/>
            <person name="Bagnat M."/>
        </authorList>
    </citation>
    <scope>FUNCTION</scope>
    <scope>SUBCELLULAR LOCATION</scope>
    <scope>MUTAGENESIS OF 205-SER-PRO-206</scope>
</reference>
<reference key="6">
    <citation type="journal article" date="2015" name="Biol. Open">
        <title>The zebrafish Kupffer's vesicle as a model system for the molecular mechanisms by which the lack of Polycystin-2 leads to stimulation of CFTR.</title>
        <authorList>
            <person name="Roxo-Rosa M."/>
            <person name="Jacinto R."/>
            <person name="Sampaio P."/>
            <person name="Lopes S.S."/>
        </authorList>
    </citation>
    <scope>FUNCTION</scope>
    <scope>DISRUPTION PHENOTYPE</scope>
    <scope>TISSUE SPECIFICITY</scope>
</reference>
<reference key="7">
    <citation type="journal article" date="2015" name="Dev. Biol.">
        <title>Loss of cftr function leads to pancreatic destruction in larval zebrafish.</title>
        <authorList>
            <person name="Navis A."/>
            <person name="Bagnat M."/>
        </authorList>
    </citation>
    <scope>DISRUPTION PHENOTYPE</scope>
    <scope>FUNCTION</scope>
    <scope>SUBCELLULAR LOCATION</scope>
    <scope>DEVELOPMENTAL STAGE</scope>
    <scope>TISSUE SPECIFICITY</scope>
</reference>
<reference key="8">
    <citation type="journal article" date="2018" name="Elife">
        <title>Cell volume changes contribute to epithelial morphogenesis in zebrafish Kupffer's vesicle.</title>
        <authorList>
            <person name="Dasgupta A."/>
            <person name="Merkel M."/>
            <person name="Clark M.J."/>
            <person name="Jacob A.E."/>
            <person name="Dawson J.E."/>
            <person name="Manning M.L."/>
            <person name="Amack J.D."/>
        </authorList>
    </citation>
    <scope>FUNCTION</scope>
    <scope>DISRUPTION PHENOTYPE</scope>
</reference>
<reference key="9">
    <citation type="journal article" date="2016" name="Cell">
        <title>Atomic structure of the cystic fibrosis transmembrane conductance regulator.</title>
        <authorList>
            <person name="Zhang Z."/>
            <person name="Chen J."/>
        </authorList>
    </citation>
    <scope>STRUCTURE BY ELECTRON MICROSCOPY (3.73 ANGSTROMS)</scope>
    <scope>CATALYTIC ACTIVITY</scope>
    <scope>TOPOLOGY</scope>
    <scope>SUBCELLULAR LOCATION</scope>
    <scope>BIOPHYSICOCHEMICAL PROPERTIES</scope>
</reference>
<dbReference type="EC" id="5.6.1.6" evidence="6 13"/>
<dbReference type="EMBL" id="BX470130">
    <property type="status" value="NOT_ANNOTATED_CDS"/>
    <property type="molecule type" value="Genomic_DNA"/>
</dbReference>
<dbReference type="EMBL" id="BC171654">
    <property type="protein sequence ID" value="AAI71654.1"/>
    <property type="molecule type" value="mRNA"/>
</dbReference>
<dbReference type="RefSeq" id="NP_001038348.1">
    <property type="nucleotide sequence ID" value="NM_001044883.1"/>
</dbReference>
<dbReference type="PDB" id="5UAR">
    <property type="method" value="EM"/>
    <property type="resolution" value="3.73 A"/>
    <property type="chains" value="A=1-1485"/>
</dbReference>
<dbReference type="PDB" id="5W81">
    <property type="method" value="EM"/>
    <property type="resolution" value="3.37 A"/>
    <property type="chains" value="A=1-1485"/>
</dbReference>
<dbReference type="PDBsum" id="5UAR"/>
<dbReference type="PDBsum" id="5W81"/>
<dbReference type="EMDB" id="EMD-8461"/>
<dbReference type="EMDB" id="EMD-8782"/>
<dbReference type="SMR" id="Q1LX78"/>
<dbReference type="FunCoup" id="Q1LX78">
    <property type="interactions" value="275"/>
</dbReference>
<dbReference type="STRING" id="7955.ENSDARP00000060242"/>
<dbReference type="TCDB" id="3.A.1.202.2">
    <property type="family name" value="the atp-binding cassette (abc) superfamily"/>
</dbReference>
<dbReference type="GlyCosmos" id="Q1LX78">
    <property type="glycosylation" value="2 sites, No reported glycans"/>
</dbReference>
<dbReference type="PaxDb" id="7955-ENSDARP00000060242"/>
<dbReference type="Ensembl" id="ENSDART00000060243">
    <property type="protein sequence ID" value="ENSDARP00000060242"/>
    <property type="gene ID" value="ENSDARG00000041107"/>
</dbReference>
<dbReference type="GeneID" id="559080"/>
<dbReference type="KEGG" id="dre:559080"/>
<dbReference type="AGR" id="ZFIN:ZDB-GENE-050517-20"/>
<dbReference type="CTD" id="1080"/>
<dbReference type="ZFIN" id="ZDB-GENE-050517-20">
    <property type="gene designation" value="cftr"/>
</dbReference>
<dbReference type="eggNOG" id="KOG0054">
    <property type="taxonomic scope" value="Eukaryota"/>
</dbReference>
<dbReference type="HOGENOM" id="CLU_000604_27_1_1"/>
<dbReference type="InParanoid" id="Q1LX78"/>
<dbReference type="OMA" id="CQRYLVI"/>
<dbReference type="OrthoDB" id="6500128at2759"/>
<dbReference type="PhylomeDB" id="Q1LX78"/>
<dbReference type="TreeFam" id="TF105200"/>
<dbReference type="BRENDA" id="5.6.1.6">
    <property type="organism ID" value="928"/>
</dbReference>
<dbReference type="Reactome" id="R-DRE-382556">
    <property type="pathway name" value="ABC-family proteins mediated transport"/>
</dbReference>
<dbReference type="Reactome" id="R-DRE-5627083">
    <property type="pathway name" value="RHO GTPases regulate CFTR trafficking"/>
</dbReference>
<dbReference type="Reactome" id="R-DRE-9013406">
    <property type="pathway name" value="RHOQ GTPase cycle"/>
</dbReference>
<dbReference type="Reactome" id="R-DRE-9646399">
    <property type="pathway name" value="Aggrephagy"/>
</dbReference>
<dbReference type="PRO" id="PR:Q1LX78"/>
<dbReference type="Proteomes" id="UP000000437">
    <property type="component" value="Alternate scaffold 18"/>
</dbReference>
<dbReference type="Proteomes" id="UP000000437">
    <property type="component" value="Chromosome 18"/>
</dbReference>
<dbReference type="Bgee" id="ENSDARG00000041107">
    <property type="expression patterns" value="Expressed in testis and 6 other cell types or tissues"/>
</dbReference>
<dbReference type="GO" id="GO:0016324">
    <property type="term" value="C:apical plasma membrane"/>
    <property type="evidence" value="ECO:0000314"/>
    <property type="project" value="ZFIN"/>
</dbReference>
<dbReference type="GO" id="GO:0034707">
    <property type="term" value="C:chloride channel complex"/>
    <property type="evidence" value="ECO:0007669"/>
    <property type="project" value="UniProtKB-KW"/>
</dbReference>
<dbReference type="GO" id="GO:0005829">
    <property type="term" value="C:cytosol"/>
    <property type="evidence" value="ECO:0000318"/>
    <property type="project" value="GO_Central"/>
</dbReference>
<dbReference type="GO" id="GO:0031901">
    <property type="term" value="C:early endosome membrane"/>
    <property type="evidence" value="ECO:0007669"/>
    <property type="project" value="UniProtKB-SubCell"/>
</dbReference>
<dbReference type="GO" id="GO:0005789">
    <property type="term" value="C:endoplasmic reticulum membrane"/>
    <property type="evidence" value="ECO:0000250"/>
    <property type="project" value="UniProtKB"/>
</dbReference>
<dbReference type="GO" id="GO:0016020">
    <property type="term" value="C:membrane"/>
    <property type="evidence" value="ECO:0000314"/>
    <property type="project" value="UniProtKB"/>
</dbReference>
<dbReference type="GO" id="GO:0005886">
    <property type="term" value="C:plasma membrane"/>
    <property type="evidence" value="ECO:0000250"/>
    <property type="project" value="UniProtKB"/>
</dbReference>
<dbReference type="GO" id="GO:0055038">
    <property type="term" value="C:recycling endosome membrane"/>
    <property type="evidence" value="ECO:0007669"/>
    <property type="project" value="UniProtKB-SubCell"/>
</dbReference>
<dbReference type="GO" id="GO:0140359">
    <property type="term" value="F:ABC-type transporter activity"/>
    <property type="evidence" value="ECO:0007669"/>
    <property type="project" value="InterPro"/>
</dbReference>
<dbReference type="GO" id="GO:0005524">
    <property type="term" value="F:ATP binding"/>
    <property type="evidence" value="ECO:0000314"/>
    <property type="project" value="ZFIN"/>
</dbReference>
<dbReference type="GO" id="GO:0016887">
    <property type="term" value="F:ATP hydrolysis activity"/>
    <property type="evidence" value="ECO:0000314"/>
    <property type="project" value="UniProtKB"/>
</dbReference>
<dbReference type="GO" id="GO:0042626">
    <property type="term" value="F:ATPase-coupled transmembrane transporter activity"/>
    <property type="evidence" value="ECO:0000318"/>
    <property type="project" value="GO_Central"/>
</dbReference>
<dbReference type="GO" id="GO:0015106">
    <property type="term" value="F:bicarbonate transmembrane transporter activity"/>
    <property type="evidence" value="ECO:0000250"/>
    <property type="project" value="UniProtKB"/>
</dbReference>
<dbReference type="GO" id="GO:0005254">
    <property type="term" value="F:chloride channel activity"/>
    <property type="evidence" value="ECO:0000314"/>
    <property type="project" value="ZFIN"/>
</dbReference>
<dbReference type="GO" id="GO:0005260">
    <property type="term" value="F:intracellularly ATP-gated chloride channel activity"/>
    <property type="evidence" value="ECO:0000250"/>
    <property type="project" value="UniProtKB"/>
</dbReference>
<dbReference type="GO" id="GO:0015701">
    <property type="term" value="P:bicarbonate transport"/>
    <property type="evidence" value="ECO:0000250"/>
    <property type="project" value="UniProtKB"/>
</dbReference>
<dbReference type="GO" id="GO:1904322">
    <property type="term" value="P:cellular response to forskolin"/>
    <property type="evidence" value="ECO:0000250"/>
    <property type="project" value="UniProtKB"/>
</dbReference>
<dbReference type="GO" id="GO:1902476">
    <property type="term" value="P:chloride transmembrane transport"/>
    <property type="evidence" value="ECO:0000250"/>
    <property type="project" value="UniProtKB"/>
</dbReference>
<dbReference type="GO" id="GO:0042742">
    <property type="term" value="P:defense response to bacterium"/>
    <property type="evidence" value="ECO:0000315"/>
    <property type="project" value="ZFIN"/>
</dbReference>
<dbReference type="GO" id="GO:0035162">
    <property type="term" value="P:embryonic hemopoiesis"/>
    <property type="evidence" value="ECO:0000315"/>
    <property type="project" value="ZFIN"/>
</dbReference>
<dbReference type="GO" id="GO:0008354">
    <property type="term" value="P:germ cell migration"/>
    <property type="evidence" value="ECO:0000315"/>
    <property type="project" value="ZFIN"/>
</dbReference>
<dbReference type="GO" id="GO:0007507">
    <property type="term" value="P:heart development"/>
    <property type="evidence" value="ECO:0000315"/>
    <property type="project" value="ZFIN"/>
</dbReference>
<dbReference type="GO" id="GO:0045087">
    <property type="term" value="P:innate immune response"/>
    <property type="evidence" value="ECO:0000315"/>
    <property type="project" value="ZFIN"/>
</dbReference>
<dbReference type="GO" id="GO:0070121">
    <property type="term" value="P:Kupffer's vesicle development"/>
    <property type="evidence" value="ECO:0000315"/>
    <property type="project" value="UniProtKB"/>
</dbReference>
<dbReference type="GO" id="GO:0097535">
    <property type="term" value="P:lymphoid lineage cell migration into thymus"/>
    <property type="evidence" value="ECO:0000315"/>
    <property type="project" value="ZFIN"/>
</dbReference>
<dbReference type="GO" id="GO:0050891">
    <property type="term" value="P:multicellular organismal-level water homeostasis"/>
    <property type="evidence" value="ECO:0000250"/>
    <property type="project" value="UniProtKB"/>
</dbReference>
<dbReference type="GO" id="GO:0031016">
    <property type="term" value="P:pancreas development"/>
    <property type="evidence" value="ECO:0000315"/>
    <property type="project" value="ZFIN"/>
</dbReference>
<dbReference type="GO" id="GO:0090022">
    <property type="term" value="P:regulation of neutrophil chemotaxis"/>
    <property type="evidence" value="ECO:0000315"/>
    <property type="project" value="ZFIN"/>
</dbReference>
<dbReference type="GO" id="GO:0002679">
    <property type="term" value="P:respiratory burst involved in defense response"/>
    <property type="evidence" value="ECO:0000315"/>
    <property type="project" value="ZFIN"/>
</dbReference>
<dbReference type="GO" id="GO:0060063">
    <property type="term" value="P:Spemann organizer formation at the embryonic shield"/>
    <property type="evidence" value="ECO:0000315"/>
    <property type="project" value="ZFIN"/>
</dbReference>
<dbReference type="GO" id="GO:0030217">
    <property type="term" value="P:T cell differentiation"/>
    <property type="evidence" value="ECO:0000315"/>
    <property type="project" value="ZFIN"/>
</dbReference>
<dbReference type="GO" id="GO:0035377">
    <property type="term" value="P:transepithelial water transport"/>
    <property type="evidence" value="ECO:0000250"/>
    <property type="project" value="UniProtKB"/>
</dbReference>
<dbReference type="CDD" id="cd18594">
    <property type="entry name" value="ABC_6TM_CFTR_D1"/>
    <property type="match status" value="1"/>
</dbReference>
<dbReference type="CDD" id="cd18600">
    <property type="entry name" value="ABC_6TM_CFTR_D2"/>
    <property type="match status" value="1"/>
</dbReference>
<dbReference type="CDD" id="cd03289">
    <property type="entry name" value="ABCC_CFTR2"/>
    <property type="match status" value="1"/>
</dbReference>
<dbReference type="FunFam" id="1.20.1560.10:FF:000017">
    <property type="entry name" value="Cystic fibrosis transmembrane conductance regulator"/>
    <property type="match status" value="1"/>
</dbReference>
<dbReference type="FunFam" id="1.20.1560.10:FF:000019">
    <property type="entry name" value="Cystic fibrosis transmembrane conductance regulator"/>
    <property type="match status" value="1"/>
</dbReference>
<dbReference type="FunFam" id="3.40.50.300:FF:001172">
    <property type="entry name" value="Cystic fibrosis transmembrane conductance regulator"/>
    <property type="match status" value="1"/>
</dbReference>
<dbReference type="FunFam" id="3.40.50.300:FF:000973">
    <property type="entry name" value="Multidrug resistance-associated protein 4"/>
    <property type="match status" value="1"/>
</dbReference>
<dbReference type="Gene3D" id="1.20.1560.10">
    <property type="entry name" value="ABC transporter type 1, transmembrane domain"/>
    <property type="match status" value="2"/>
</dbReference>
<dbReference type="Gene3D" id="3.40.50.300">
    <property type="entry name" value="P-loop containing nucleotide triphosphate hydrolases"/>
    <property type="match status" value="2"/>
</dbReference>
<dbReference type="InterPro" id="IPR003593">
    <property type="entry name" value="AAA+_ATPase"/>
</dbReference>
<dbReference type="InterPro" id="IPR011527">
    <property type="entry name" value="ABC1_TM_dom"/>
</dbReference>
<dbReference type="InterPro" id="IPR036640">
    <property type="entry name" value="ABC1_TM_sf"/>
</dbReference>
<dbReference type="InterPro" id="IPR003439">
    <property type="entry name" value="ABC_transporter-like_ATP-bd"/>
</dbReference>
<dbReference type="InterPro" id="IPR017871">
    <property type="entry name" value="ABC_transporter-like_CS"/>
</dbReference>
<dbReference type="InterPro" id="IPR050173">
    <property type="entry name" value="ABC_transporter_C-like"/>
</dbReference>
<dbReference type="InterPro" id="IPR009147">
    <property type="entry name" value="CFTR/ABCC7"/>
</dbReference>
<dbReference type="InterPro" id="IPR025837">
    <property type="entry name" value="CFTR_reg_dom"/>
</dbReference>
<dbReference type="InterPro" id="IPR027417">
    <property type="entry name" value="P-loop_NTPase"/>
</dbReference>
<dbReference type="NCBIfam" id="TIGR01271">
    <property type="entry name" value="CFTR_protein"/>
    <property type="match status" value="1"/>
</dbReference>
<dbReference type="PANTHER" id="PTHR24223">
    <property type="entry name" value="ATP-BINDING CASSETTE SUB-FAMILY C"/>
    <property type="match status" value="1"/>
</dbReference>
<dbReference type="PANTHER" id="PTHR24223:SF19">
    <property type="entry name" value="CYSTIC FIBROSIS TRANSMEMBRANE CONDUCTANCE REGULATOR"/>
    <property type="match status" value="1"/>
</dbReference>
<dbReference type="Pfam" id="PF00664">
    <property type="entry name" value="ABC_membrane"/>
    <property type="match status" value="2"/>
</dbReference>
<dbReference type="Pfam" id="PF00005">
    <property type="entry name" value="ABC_tran"/>
    <property type="match status" value="2"/>
</dbReference>
<dbReference type="Pfam" id="PF14396">
    <property type="entry name" value="CFTR_R"/>
    <property type="match status" value="1"/>
</dbReference>
<dbReference type="PRINTS" id="PR01851">
    <property type="entry name" value="CYSFIBREGLTR"/>
</dbReference>
<dbReference type="SMART" id="SM00382">
    <property type="entry name" value="AAA"/>
    <property type="match status" value="2"/>
</dbReference>
<dbReference type="SUPFAM" id="SSF90123">
    <property type="entry name" value="ABC transporter transmembrane region"/>
    <property type="match status" value="2"/>
</dbReference>
<dbReference type="SUPFAM" id="SSF52540">
    <property type="entry name" value="P-loop containing nucleoside triphosphate hydrolases"/>
    <property type="match status" value="2"/>
</dbReference>
<dbReference type="PROSITE" id="PS50929">
    <property type="entry name" value="ABC_TM1F"/>
    <property type="match status" value="2"/>
</dbReference>
<dbReference type="PROSITE" id="PS00211">
    <property type="entry name" value="ABC_TRANSPORTER_1"/>
    <property type="match status" value="1"/>
</dbReference>
<dbReference type="PROSITE" id="PS50893">
    <property type="entry name" value="ABC_TRANSPORTER_2"/>
    <property type="match status" value="2"/>
</dbReference>
<name>CFTR_DANRE</name>